<protein>
    <recommendedName>
        <fullName>Annexin A9</fullName>
    </recommendedName>
    <alternativeName>
        <fullName>Annexin-9</fullName>
    </alternativeName>
</protein>
<sequence length="345" mass="38293">MSVTHGKMGLSLTQEILSHLGLANKTAAWGTLGTLRTFLSFSADKDVQRLLKAIAGQGVDRIAILDVLTNRSREQRQLISRAFHERTQQDLLKSLQAALSGNLERIVVALLQPAAHLDARELRTALKGSGSAEDVALEILATRTPPQLQECLAVYKHNFQVDAAEDIKSETRGILRDLLLALAKGGREAYTGIIDYNLAAQDVQALKQAEGPSTERTWVLVFTQRNPEHLVRVLNQYQWYTGHGLEKTVRARFHGAACVALLNLASVIRNTPLYFADKLHQALQETEPNYQALMRILISRSETDLLSIRAEFRKKFGKSLYSSLQDAVKGDCRSALLALCRAEDL</sequence>
<evidence type="ECO:0000250" key="1"/>
<evidence type="ECO:0000255" key="2">
    <source>
        <dbReference type="PROSITE-ProRule" id="PRU01245"/>
    </source>
</evidence>
<evidence type="ECO:0000305" key="3"/>
<dbReference type="EMBL" id="BC102991">
    <property type="protein sequence ID" value="AAI02992.1"/>
    <property type="molecule type" value="mRNA"/>
</dbReference>
<dbReference type="RefSeq" id="NP_001030450.1">
    <property type="nucleotide sequence ID" value="NM_001035373.2"/>
</dbReference>
<dbReference type="SMR" id="Q3ZC08"/>
<dbReference type="FunCoup" id="Q3ZC08">
    <property type="interactions" value="2"/>
</dbReference>
<dbReference type="STRING" id="9913.ENSBTAP00000074160"/>
<dbReference type="PaxDb" id="9913-ENSBTAP00000020350"/>
<dbReference type="GeneID" id="528055"/>
<dbReference type="KEGG" id="bta:528055"/>
<dbReference type="CTD" id="8416"/>
<dbReference type="eggNOG" id="KOG0819">
    <property type="taxonomic scope" value="Eukaryota"/>
</dbReference>
<dbReference type="InParanoid" id="Q3ZC08"/>
<dbReference type="OrthoDB" id="37886at2759"/>
<dbReference type="Proteomes" id="UP000009136">
    <property type="component" value="Unplaced"/>
</dbReference>
<dbReference type="GO" id="GO:0005737">
    <property type="term" value="C:cytoplasm"/>
    <property type="evidence" value="ECO:0000318"/>
    <property type="project" value="GO_Central"/>
</dbReference>
<dbReference type="GO" id="GO:0005634">
    <property type="term" value="C:nucleus"/>
    <property type="evidence" value="ECO:0000318"/>
    <property type="project" value="GO_Central"/>
</dbReference>
<dbReference type="GO" id="GO:0005886">
    <property type="term" value="C:plasma membrane"/>
    <property type="evidence" value="ECO:0000318"/>
    <property type="project" value="GO_Central"/>
</dbReference>
<dbReference type="GO" id="GO:0012506">
    <property type="term" value="C:vesicle membrane"/>
    <property type="evidence" value="ECO:0000318"/>
    <property type="project" value="GO_Central"/>
</dbReference>
<dbReference type="GO" id="GO:0005509">
    <property type="term" value="F:calcium ion binding"/>
    <property type="evidence" value="ECO:0007669"/>
    <property type="project" value="InterPro"/>
</dbReference>
<dbReference type="GO" id="GO:0005544">
    <property type="term" value="F:calcium-dependent phospholipid binding"/>
    <property type="evidence" value="ECO:0000318"/>
    <property type="project" value="GO_Central"/>
</dbReference>
<dbReference type="GO" id="GO:0001786">
    <property type="term" value="F:phosphatidylserine binding"/>
    <property type="evidence" value="ECO:0000318"/>
    <property type="project" value="GO_Central"/>
</dbReference>
<dbReference type="FunFam" id="1.10.220.10:FF:000001">
    <property type="entry name" value="Annexin"/>
    <property type="match status" value="1"/>
</dbReference>
<dbReference type="FunFam" id="1.10.220.10:FF:000003">
    <property type="entry name" value="Annexin"/>
    <property type="match status" value="1"/>
</dbReference>
<dbReference type="FunFam" id="1.10.220.10:FF:000016">
    <property type="entry name" value="Annexin"/>
    <property type="match status" value="1"/>
</dbReference>
<dbReference type="FunFam" id="1.10.220.10:FF:000017">
    <property type="entry name" value="Annexin"/>
    <property type="match status" value="1"/>
</dbReference>
<dbReference type="Gene3D" id="1.10.220.10">
    <property type="entry name" value="Annexin"/>
    <property type="match status" value="4"/>
</dbReference>
<dbReference type="InterPro" id="IPR001464">
    <property type="entry name" value="Annexin"/>
</dbReference>
<dbReference type="InterPro" id="IPR018502">
    <property type="entry name" value="Annexin_repeat"/>
</dbReference>
<dbReference type="InterPro" id="IPR018252">
    <property type="entry name" value="Annexin_repeat_CS"/>
</dbReference>
<dbReference type="InterPro" id="IPR037104">
    <property type="entry name" value="Annexin_sf"/>
</dbReference>
<dbReference type="InterPro" id="IPR009116">
    <property type="entry name" value="ANX9"/>
</dbReference>
<dbReference type="PANTHER" id="PTHR10502">
    <property type="entry name" value="ANNEXIN"/>
    <property type="match status" value="1"/>
</dbReference>
<dbReference type="PANTHER" id="PTHR10502:SF122">
    <property type="entry name" value="ANNEXIN A9"/>
    <property type="match status" value="1"/>
</dbReference>
<dbReference type="Pfam" id="PF00191">
    <property type="entry name" value="Annexin"/>
    <property type="match status" value="4"/>
</dbReference>
<dbReference type="PRINTS" id="PR00196">
    <property type="entry name" value="ANNEXIN"/>
</dbReference>
<dbReference type="PRINTS" id="PR01812">
    <property type="entry name" value="ANNEXINXXXI"/>
</dbReference>
<dbReference type="SMART" id="SM00335">
    <property type="entry name" value="ANX"/>
    <property type="match status" value="3"/>
</dbReference>
<dbReference type="SUPFAM" id="SSF47874">
    <property type="entry name" value="Annexin"/>
    <property type="match status" value="1"/>
</dbReference>
<dbReference type="PROSITE" id="PS00223">
    <property type="entry name" value="ANNEXIN_1"/>
    <property type="match status" value="1"/>
</dbReference>
<dbReference type="PROSITE" id="PS51897">
    <property type="entry name" value="ANNEXIN_2"/>
    <property type="match status" value="4"/>
</dbReference>
<accession>Q3ZC08</accession>
<feature type="chain" id="PRO_0000236218" description="Annexin A9">
    <location>
        <begin position="1"/>
        <end position="345"/>
    </location>
</feature>
<feature type="repeat" description="Annexin 1" evidence="2">
    <location>
        <begin position="41"/>
        <end position="112"/>
    </location>
</feature>
<feature type="repeat" description="Annexin 2" evidence="2">
    <location>
        <begin position="113"/>
        <end position="184"/>
    </location>
</feature>
<feature type="repeat" description="Annexin 3" evidence="2">
    <location>
        <begin position="197"/>
        <end position="266"/>
    </location>
</feature>
<feature type="repeat" description="Annexin 4" evidence="2">
    <location>
        <begin position="270"/>
        <end position="341"/>
    </location>
</feature>
<name>ANXA9_BOVIN</name>
<organism>
    <name type="scientific">Bos taurus</name>
    <name type="common">Bovine</name>
    <dbReference type="NCBI Taxonomy" id="9913"/>
    <lineage>
        <taxon>Eukaryota</taxon>
        <taxon>Metazoa</taxon>
        <taxon>Chordata</taxon>
        <taxon>Craniata</taxon>
        <taxon>Vertebrata</taxon>
        <taxon>Euteleostomi</taxon>
        <taxon>Mammalia</taxon>
        <taxon>Eutheria</taxon>
        <taxon>Laurasiatheria</taxon>
        <taxon>Artiodactyla</taxon>
        <taxon>Ruminantia</taxon>
        <taxon>Pecora</taxon>
        <taxon>Bovidae</taxon>
        <taxon>Bovinae</taxon>
        <taxon>Bos</taxon>
    </lineage>
</organism>
<keyword id="KW-0041">Annexin</keyword>
<keyword id="KW-0675">Receptor</keyword>
<keyword id="KW-1185">Reference proteome</keyword>
<keyword id="KW-0677">Repeat</keyword>
<proteinExistence type="evidence at transcript level"/>
<comment type="function">
    <text evidence="1">May act as a low affinity receptor for acetylcholine.</text>
</comment>
<comment type="subunit">
    <text evidence="1">Homodimer.</text>
</comment>
<comment type="similarity">
    <text evidence="2 3">Belongs to the annexin family.</text>
</comment>
<reference key="1">
    <citation type="submission" date="2005-08" db="EMBL/GenBank/DDBJ databases">
        <authorList>
            <consortium name="NIH - Mammalian Gene Collection (MGC) project"/>
        </authorList>
    </citation>
    <scope>NUCLEOTIDE SEQUENCE [LARGE SCALE MRNA]</scope>
    <source>
        <strain>Hereford</strain>
        <tissue>Heart ventricle</tissue>
    </source>
</reference>
<gene>
    <name type="primary">ANXA9</name>
</gene>